<proteinExistence type="inferred from homology"/>
<evidence type="ECO:0000255" key="1">
    <source>
        <dbReference type="HAMAP-Rule" id="MF_03217"/>
    </source>
</evidence>
<evidence type="ECO:0000256" key="2">
    <source>
        <dbReference type="SAM" id="MobiDB-lite"/>
    </source>
</evidence>
<gene>
    <name type="primary">CHO2</name>
    <name type="ORF">SNOG_13932</name>
</gene>
<reference key="1">
    <citation type="journal article" date="2007" name="Plant Cell">
        <title>Dothideomycete-plant interactions illuminated by genome sequencing and EST analysis of the wheat pathogen Stagonospora nodorum.</title>
        <authorList>
            <person name="Hane J.K."/>
            <person name="Lowe R.G.T."/>
            <person name="Solomon P.S."/>
            <person name="Tan K.-C."/>
            <person name="Schoch C.L."/>
            <person name="Spatafora J.W."/>
            <person name="Crous P.W."/>
            <person name="Kodira C.D."/>
            <person name="Birren B.W."/>
            <person name="Galagan J.E."/>
            <person name="Torriani S.F.F."/>
            <person name="McDonald B.A."/>
            <person name="Oliver R.P."/>
        </authorList>
    </citation>
    <scope>NUCLEOTIDE SEQUENCE [LARGE SCALE GENOMIC DNA]</scope>
    <source>
        <strain>SN15 / ATCC MYA-4574 / FGSC 10173</strain>
    </source>
</reference>
<keyword id="KW-0256">Endoplasmic reticulum</keyword>
<keyword id="KW-0444">Lipid biosynthesis</keyword>
<keyword id="KW-0443">Lipid metabolism</keyword>
<keyword id="KW-0472">Membrane</keyword>
<keyword id="KW-0489">Methyltransferase</keyword>
<keyword id="KW-0594">Phospholipid biosynthesis</keyword>
<keyword id="KW-1208">Phospholipid metabolism</keyword>
<keyword id="KW-0949">S-adenosyl-L-methionine</keyword>
<keyword id="KW-0808">Transferase</keyword>
<keyword id="KW-0812">Transmembrane</keyword>
<keyword id="KW-1133">Transmembrane helix</keyword>
<organism>
    <name type="scientific">Phaeosphaeria nodorum (strain SN15 / ATCC MYA-4574 / FGSC 10173)</name>
    <name type="common">Glume blotch fungus</name>
    <name type="synonym">Parastagonospora nodorum</name>
    <dbReference type="NCBI Taxonomy" id="321614"/>
    <lineage>
        <taxon>Eukaryota</taxon>
        <taxon>Fungi</taxon>
        <taxon>Dikarya</taxon>
        <taxon>Ascomycota</taxon>
        <taxon>Pezizomycotina</taxon>
        <taxon>Dothideomycetes</taxon>
        <taxon>Pleosporomycetidae</taxon>
        <taxon>Pleosporales</taxon>
        <taxon>Pleosporineae</taxon>
        <taxon>Phaeosphaeriaceae</taxon>
        <taxon>Parastagonospora</taxon>
    </lineage>
</organism>
<comment type="function">
    <text evidence="1">Catalyzes the first step of the methylation pathway of phosphatidylcholine biosynthesis, the SAM-dependent methylation of phosphatidylethanolamine (PE) to phosphatidylmonomethylethanolamine (PMME).</text>
</comment>
<comment type="catalytic activity">
    <reaction evidence="1">
        <text>a 1,2-diacyl-sn-glycero-3-phosphoethanolamine + S-adenosyl-L-methionine = a 1,2-diacyl-sn-glycero-3-phospho-N-methylethanolamine + S-adenosyl-L-homocysteine + H(+)</text>
        <dbReference type="Rhea" id="RHEA:11164"/>
        <dbReference type="ChEBI" id="CHEBI:15378"/>
        <dbReference type="ChEBI" id="CHEBI:57856"/>
        <dbReference type="ChEBI" id="CHEBI:59789"/>
        <dbReference type="ChEBI" id="CHEBI:64573"/>
        <dbReference type="ChEBI" id="CHEBI:64612"/>
        <dbReference type="EC" id="2.1.1.17"/>
    </reaction>
</comment>
<comment type="pathway">
    <text evidence="1">Phospholipid metabolism; phosphatidylcholine biosynthesis.</text>
</comment>
<comment type="subcellular location">
    <subcellularLocation>
        <location evidence="1">Endoplasmic reticulum membrane</location>
        <topology evidence="1">Multi-pass membrane protein</topology>
    </subcellularLocation>
</comment>
<comment type="similarity">
    <text evidence="1">Belongs to the class VI-like SAM-binding methyltransferase superfamily. CHO2 family.</text>
</comment>
<name>CHO2_PHANO</name>
<accession>Q0U2R3</accession>
<dbReference type="EC" id="2.1.1.17" evidence="1"/>
<dbReference type="EMBL" id="CH445353">
    <property type="protein sequence ID" value="EAT78557.2"/>
    <property type="molecule type" value="Genomic_DNA"/>
</dbReference>
<dbReference type="RefSeq" id="XP_001804132.1">
    <property type="nucleotide sequence ID" value="XM_001804080.1"/>
</dbReference>
<dbReference type="SMR" id="Q0U2R3"/>
<dbReference type="FunCoup" id="Q0U2R3">
    <property type="interactions" value="57"/>
</dbReference>
<dbReference type="STRING" id="321614.Q0U2R3"/>
<dbReference type="EnsemblFungi" id="SNOT_13932">
    <property type="protein sequence ID" value="SNOT_13932"/>
    <property type="gene ID" value="SNOG_13932"/>
</dbReference>
<dbReference type="GeneID" id="5981055"/>
<dbReference type="KEGG" id="pno:SNOG_13932"/>
<dbReference type="VEuPathDB" id="FungiDB:JI435_139320"/>
<dbReference type="eggNOG" id="ENOG502QRGH">
    <property type="taxonomic scope" value="Eukaryota"/>
</dbReference>
<dbReference type="HOGENOM" id="CLU_005987_0_1_1"/>
<dbReference type="InParanoid" id="Q0U2R3"/>
<dbReference type="UniPathway" id="UPA00753"/>
<dbReference type="Proteomes" id="UP000001055">
    <property type="component" value="Unassembled WGS sequence"/>
</dbReference>
<dbReference type="GO" id="GO:0032541">
    <property type="term" value="C:cortical endoplasmic reticulum"/>
    <property type="evidence" value="ECO:0007669"/>
    <property type="project" value="EnsemblFungi"/>
</dbReference>
<dbReference type="GO" id="GO:0005789">
    <property type="term" value="C:endoplasmic reticulum membrane"/>
    <property type="evidence" value="ECO:0007669"/>
    <property type="project" value="UniProtKB-SubCell"/>
</dbReference>
<dbReference type="GO" id="GO:0097038">
    <property type="term" value="C:perinuclear endoplasmic reticulum"/>
    <property type="evidence" value="ECO:0007669"/>
    <property type="project" value="EnsemblFungi"/>
</dbReference>
<dbReference type="GO" id="GO:0004608">
    <property type="term" value="F:phosphatidylethanolamine N-methyltransferase activity"/>
    <property type="evidence" value="ECO:0000318"/>
    <property type="project" value="GO_Central"/>
</dbReference>
<dbReference type="GO" id="GO:0032259">
    <property type="term" value="P:methylation"/>
    <property type="evidence" value="ECO:0007669"/>
    <property type="project" value="UniProtKB-KW"/>
</dbReference>
<dbReference type="GO" id="GO:0006656">
    <property type="term" value="P:phosphatidylcholine biosynthetic process"/>
    <property type="evidence" value="ECO:0000318"/>
    <property type="project" value="GO_Central"/>
</dbReference>
<dbReference type="HAMAP" id="MF_03217">
    <property type="entry name" value="PEMT"/>
    <property type="match status" value="1"/>
</dbReference>
<dbReference type="InterPro" id="IPR007318">
    <property type="entry name" value="Phopholipid_MeTrfase"/>
</dbReference>
<dbReference type="InterPro" id="IPR016219">
    <property type="entry name" value="Phosphatid-EA_MeTrfase_fun"/>
</dbReference>
<dbReference type="PANTHER" id="PTHR32138">
    <property type="entry name" value="PHOSPHATIDYLETHANOLAMINE N-METHYLTRANSFERASE"/>
    <property type="match status" value="1"/>
</dbReference>
<dbReference type="PANTHER" id="PTHR32138:SF0">
    <property type="entry name" value="PHOSPHATIDYLETHANOLAMINE N-METHYLTRANSFERASE"/>
    <property type="match status" value="1"/>
</dbReference>
<dbReference type="Pfam" id="PF04191">
    <property type="entry name" value="PEMT"/>
    <property type="match status" value="1"/>
</dbReference>
<dbReference type="PIRSF" id="PIRSF000383">
    <property type="entry name" value="PEAMT"/>
    <property type="match status" value="1"/>
</dbReference>
<dbReference type="PROSITE" id="PS51598">
    <property type="entry name" value="SAM_CHO2"/>
    <property type="match status" value="1"/>
</dbReference>
<feature type="chain" id="PRO_0000405906" description="Phosphatidylethanolamine N-methyltransferase">
    <location>
        <begin position="1"/>
        <end position="932"/>
    </location>
</feature>
<feature type="topological domain" description="Lumenal" evidence="1">
    <location>
        <begin position="1"/>
        <end position="88"/>
    </location>
</feature>
<feature type="transmembrane region" description="Helical" evidence="1">
    <location>
        <begin position="89"/>
        <end position="109"/>
    </location>
</feature>
<feature type="topological domain" description="Cytoplasmic" evidence="1">
    <location>
        <begin position="110"/>
        <end position="112"/>
    </location>
</feature>
<feature type="transmembrane region" description="Helical" evidence="1">
    <location>
        <begin position="113"/>
        <end position="133"/>
    </location>
</feature>
<feature type="topological domain" description="Lumenal" evidence="1">
    <location>
        <begin position="134"/>
        <end position="198"/>
    </location>
</feature>
<feature type="transmembrane region" description="Helical" evidence="1">
    <location>
        <begin position="199"/>
        <end position="219"/>
    </location>
</feature>
<feature type="topological domain" description="Cytoplasmic" evidence="1">
    <location>
        <begin position="220"/>
        <end position="225"/>
    </location>
</feature>
<feature type="transmembrane region" description="Helical" evidence="1">
    <location>
        <begin position="226"/>
        <end position="246"/>
    </location>
</feature>
<feature type="topological domain" description="Lumenal" evidence="1">
    <location>
        <begin position="247"/>
        <end position="261"/>
    </location>
</feature>
<feature type="transmembrane region" description="Helical" evidence="1">
    <location>
        <begin position="262"/>
        <end position="282"/>
    </location>
</feature>
<feature type="topological domain" description="Cytoplasmic" evidence="1">
    <location>
        <begin position="283"/>
        <end position="355"/>
    </location>
</feature>
<feature type="transmembrane region" description="Helical" evidence="1">
    <location>
        <begin position="356"/>
        <end position="376"/>
    </location>
</feature>
<feature type="topological domain" description="Lumenal" evidence="1">
    <location>
        <position position="377"/>
    </location>
</feature>
<feature type="transmembrane region" description="Helical" evidence="1">
    <location>
        <begin position="378"/>
        <end position="398"/>
    </location>
</feature>
<feature type="topological domain" description="Cytoplasmic" evidence="1">
    <location>
        <begin position="399"/>
        <end position="428"/>
    </location>
</feature>
<feature type="transmembrane region" description="Helical" evidence="1">
    <location>
        <begin position="429"/>
        <end position="449"/>
    </location>
</feature>
<feature type="topological domain" description="Lumenal" evidence="1">
    <location>
        <begin position="450"/>
        <end position="454"/>
    </location>
</feature>
<feature type="transmembrane region" description="Helical" evidence="1">
    <location>
        <begin position="455"/>
        <end position="475"/>
    </location>
</feature>
<feature type="topological domain" description="Cytoplasmic" evidence="1">
    <location>
        <begin position="476"/>
        <end position="518"/>
    </location>
</feature>
<feature type="transmembrane region" description="Helical" evidence="1">
    <location>
        <begin position="519"/>
        <end position="539"/>
    </location>
</feature>
<feature type="topological domain" description="Lumenal" evidence="1">
    <location>
        <begin position="540"/>
        <end position="932"/>
    </location>
</feature>
<feature type="region of interest" description="Disordered" evidence="2">
    <location>
        <begin position="1"/>
        <end position="61"/>
    </location>
</feature>
<feature type="region of interest" description="Disordered" evidence="2">
    <location>
        <begin position="292"/>
        <end position="317"/>
    </location>
</feature>
<feature type="compositionally biased region" description="Basic and acidic residues" evidence="2">
    <location>
        <begin position="1"/>
        <end position="21"/>
    </location>
</feature>
<feature type="compositionally biased region" description="Basic and acidic residues" evidence="2">
    <location>
        <begin position="29"/>
        <end position="38"/>
    </location>
</feature>
<feature type="compositionally biased region" description="Basic and acidic residues" evidence="2">
    <location>
        <begin position="301"/>
        <end position="313"/>
    </location>
</feature>
<sequence>MADINHDGPKADGSQMRERPSAKPLHLYNSEDAKKKVLELNQEEEDNKHEEKRKTFGRTPDGTVFIVPQTHDMVSQLLSPSQPKNLSDLAILAVLASLIFTLYICPTSARKPVFAAIFLFWRAAYNAGIGWLLEGQSKHNRLVLWAKNSHIFENPETGNNPHPTIYKLIKREMETKIPKDYKFEEAPLEYNTWLVFRRVVDLILMCDFVSYCLFAIACFNRPPESWLLFGLRWTTGIVLFIFNVFVKLDAHRVVKDFAWYCYHVLFISIVAHAAQFAFLTLVEEPHIQKIYNPPPPRRMRQNSEKFNPEDRPATAHSDATYTDTGVIYDSVRQPAPMHHIVGLQNTDFHRSIDVTVVLLCFYMFCLATVTPNTIAVRLFLFVHAFVWRLWYALGLGYILDRQSKKKNWTRHFIKHGDTKEEAWRQWKSLYHLSMTMCHASFGAAVWKMYELPSDWFLGLTLLRHVLGAGLLLLQLWTSTSIYDSLGEFGWFCGDFFFDPPSSNLTYSGIYRFLNNPERVLGLAGVWGLALITWNPPIFYLAATAHILNLAFLQFVERPHMQRLYGRKLRAESGVSKTLRQAMPSPVRNWQSAADDYVNSTVEFIEDLLEHARPKLAAGYETIVKDTTALFKTYPARISITRVPQDLAGLDPKQYKLEIEGTPSAPTVEIQKHGGREGELARTPATRTSEFKTLTFEYGAPIRVRWQAPVNHHKKDWIGLYMVTDNQSREVTRISSNGRWVATNKGVYDSTRAEDGILVSDRLVSVNSDEDEGGDCYTGEVEFRGDKLWWTTGVFEFRYHHGGKHHVMALSQAFEIRIARFDEDDVEVDANGTVHRAVEQALLPVIQNCFDRDPEIAPSTPEESFGSLVERDGKFAKRVVFAVHQMFGIEFAPEVVQADGNARNLAWRICNAKKILAPYSMSASRGRNTPTSR</sequence>
<protein>
    <recommendedName>
        <fullName evidence="1">Phosphatidylethanolamine N-methyltransferase</fullName>
        <shortName evidence="1">PE methyltransferase</shortName>
        <shortName evidence="1">PEAMT</shortName>
        <shortName evidence="1">PEMT</shortName>
        <ecNumber evidence="1">2.1.1.17</ecNumber>
    </recommendedName>
</protein>